<accession>B9E5U7</accession>
<dbReference type="EC" id="3.1.-.-" evidence="1"/>
<dbReference type="EC" id="3.6.4.-" evidence="1"/>
<dbReference type="EMBL" id="AP009049">
    <property type="protein sequence ID" value="BAH07872.1"/>
    <property type="molecule type" value="Genomic_DNA"/>
</dbReference>
<dbReference type="RefSeq" id="WP_012103528.1">
    <property type="nucleotide sequence ID" value="NC_011837.1"/>
</dbReference>
<dbReference type="SMR" id="B9E5U7"/>
<dbReference type="KEGG" id="ckr:CKR_2821"/>
<dbReference type="HOGENOM" id="CLU_011252_2_1_9"/>
<dbReference type="Proteomes" id="UP000007969">
    <property type="component" value="Chromosome"/>
</dbReference>
<dbReference type="GO" id="GO:0005524">
    <property type="term" value="F:ATP binding"/>
    <property type="evidence" value="ECO:0007669"/>
    <property type="project" value="UniProtKB-UniRule"/>
</dbReference>
<dbReference type="GO" id="GO:0016887">
    <property type="term" value="F:ATP hydrolysis activity"/>
    <property type="evidence" value="ECO:0007669"/>
    <property type="project" value="InterPro"/>
</dbReference>
<dbReference type="GO" id="GO:0140664">
    <property type="term" value="F:ATP-dependent DNA damage sensor activity"/>
    <property type="evidence" value="ECO:0007669"/>
    <property type="project" value="InterPro"/>
</dbReference>
<dbReference type="GO" id="GO:0004519">
    <property type="term" value="F:endonuclease activity"/>
    <property type="evidence" value="ECO:0007669"/>
    <property type="project" value="UniProtKB-UniRule"/>
</dbReference>
<dbReference type="GO" id="GO:0030983">
    <property type="term" value="F:mismatched DNA binding"/>
    <property type="evidence" value="ECO:0007669"/>
    <property type="project" value="InterPro"/>
</dbReference>
<dbReference type="GO" id="GO:0043023">
    <property type="term" value="F:ribosomal large subunit binding"/>
    <property type="evidence" value="ECO:0007669"/>
    <property type="project" value="UniProtKB-UniRule"/>
</dbReference>
<dbReference type="GO" id="GO:0019843">
    <property type="term" value="F:rRNA binding"/>
    <property type="evidence" value="ECO:0007669"/>
    <property type="project" value="UniProtKB-UniRule"/>
</dbReference>
<dbReference type="GO" id="GO:0006298">
    <property type="term" value="P:mismatch repair"/>
    <property type="evidence" value="ECO:0007669"/>
    <property type="project" value="InterPro"/>
</dbReference>
<dbReference type="GO" id="GO:0045910">
    <property type="term" value="P:negative regulation of DNA recombination"/>
    <property type="evidence" value="ECO:0007669"/>
    <property type="project" value="InterPro"/>
</dbReference>
<dbReference type="GO" id="GO:0072344">
    <property type="term" value="P:rescue of stalled ribosome"/>
    <property type="evidence" value="ECO:0007669"/>
    <property type="project" value="UniProtKB-UniRule"/>
</dbReference>
<dbReference type="CDD" id="cd03280">
    <property type="entry name" value="ABC_MutS2"/>
    <property type="match status" value="1"/>
</dbReference>
<dbReference type="CDD" id="cd06503">
    <property type="entry name" value="ATP-synt_Fo_b"/>
    <property type="match status" value="1"/>
</dbReference>
<dbReference type="FunFam" id="3.30.1370.110:FF:000007">
    <property type="entry name" value="Endonuclease MutS2"/>
    <property type="match status" value="1"/>
</dbReference>
<dbReference type="FunFam" id="3.40.50.300:FF:000830">
    <property type="entry name" value="Endonuclease MutS2"/>
    <property type="match status" value="1"/>
</dbReference>
<dbReference type="Gene3D" id="3.30.1370.110">
    <property type="match status" value="1"/>
</dbReference>
<dbReference type="Gene3D" id="3.40.50.300">
    <property type="entry name" value="P-loop containing nucleotide triphosphate hydrolases"/>
    <property type="match status" value="1"/>
</dbReference>
<dbReference type="HAMAP" id="MF_00092">
    <property type="entry name" value="MutS2"/>
    <property type="match status" value="1"/>
</dbReference>
<dbReference type="InterPro" id="IPR000432">
    <property type="entry name" value="DNA_mismatch_repair_MutS_C"/>
</dbReference>
<dbReference type="InterPro" id="IPR007696">
    <property type="entry name" value="DNA_mismatch_repair_MutS_core"/>
</dbReference>
<dbReference type="InterPro" id="IPR036187">
    <property type="entry name" value="DNA_mismatch_repair_MutS_sf"/>
</dbReference>
<dbReference type="InterPro" id="IPR046893">
    <property type="entry name" value="MSSS"/>
</dbReference>
<dbReference type="InterPro" id="IPR045076">
    <property type="entry name" value="MutS"/>
</dbReference>
<dbReference type="InterPro" id="IPR005747">
    <property type="entry name" value="MutS2"/>
</dbReference>
<dbReference type="InterPro" id="IPR027417">
    <property type="entry name" value="P-loop_NTPase"/>
</dbReference>
<dbReference type="InterPro" id="IPR002625">
    <property type="entry name" value="Smr_dom"/>
</dbReference>
<dbReference type="InterPro" id="IPR036063">
    <property type="entry name" value="Smr_dom_sf"/>
</dbReference>
<dbReference type="NCBIfam" id="TIGR01069">
    <property type="entry name" value="mutS2"/>
    <property type="match status" value="1"/>
</dbReference>
<dbReference type="PANTHER" id="PTHR48466:SF2">
    <property type="entry name" value="OS10G0509000 PROTEIN"/>
    <property type="match status" value="1"/>
</dbReference>
<dbReference type="PANTHER" id="PTHR48466">
    <property type="entry name" value="OS10G0509000 PROTEIN-RELATED"/>
    <property type="match status" value="1"/>
</dbReference>
<dbReference type="Pfam" id="PF20297">
    <property type="entry name" value="MSSS"/>
    <property type="match status" value="1"/>
</dbReference>
<dbReference type="Pfam" id="PF00488">
    <property type="entry name" value="MutS_V"/>
    <property type="match status" value="1"/>
</dbReference>
<dbReference type="Pfam" id="PF01713">
    <property type="entry name" value="Smr"/>
    <property type="match status" value="1"/>
</dbReference>
<dbReference type="PIRSF" id="PIRSF005814">
    <property type="entry name" value="MutS_YshD"/>
    <property type="match status" value="1"/>
</dbReference>
<dbReference type="SMART" id="SM00534">
    <property type="entry name" value="MUTSac"/>
    <property type="match status" value="1"/>
</dbReference>
<dbReference type="SMART" id="SM00533">
    <property type="entry name" value="MUTSd"/>
    <property type="match status" value="1"/>
</dbReference>
<dbReference type="SMART" id="SM00463">
    <property type="entry name" value="SMR"/>
    <property type="match status" value="1"/>
</dbReference>
<dbReference type="SUPFAM" id="SSF48334">
    <property type="entry name" value="DNA repair protein MutS, domain III"/>
    <property type="match status" value="1"/>
</dbReference>
<dbReference type="SUPFAM" id="SSF52540">
    <property type="entry name" value="P-loop containing nucleoside triphosphate hydrolases"/>
    <property type="match status" value="1"/>
</dbReference>
<dbReference type="SUPFAM" id="SSF160443">
    <property type="entry name" value="SMR domain-like"/>
    <property type="match status" value="1"/>
</dbReference>
<dbReference type="PROSITE" id="PS00486">
    <property type="entry name" value="DNA_MISMATCH_REPAIR_2"/>
    <property type="match status" value="1"/>
</dbReference>
<dbReference type="PROSITE" id="PS50828">
    <property type="entry name" value="SMR"/>
    <property type="match status" value="1"/>
</dbReference>
<organism>
    <name type="scientific">Clostridium kluyveri (strain NBRC 12016)</name>
    <dbReference type="NCBI Taxonomy" id="583346"/>
    <lineage>
        <taxon>Bacteria</taxon>
        <taxon>Bacillati</taxon>
        <taxon>Bacillota</taxon>
        <taxon>Clostridia</taxon>
        <taxon>Eubacteriales</taxon>
        <taxon>Clostridiaceae</taxon>
        <taxon>Clostridium</taxon>
    </lineage>
</organism>
<gene>
    <name evidence="1" type="primary">mutS2</name>
    <name evidence="1" type="synonym">rqcU</name>
    <name type="ordered locus">CKR_2821</name>
</gene>
<name>MUTS2_CLOK1</name>
<comment type="function">
    <text evidence="1">Endonuclease that is involved in the suppression of homologous recombination and thus may have a key role in the control of bacterial genetic diversity.</text>
</comment>
<comment type="function">
    <text evidence="1">Acts as a ribosome collision sensor, splitting the ribosome into its 2 subunits. Detects stalled/collided 70S ribosomes which it binds and splits by an ATP-hydrolysis driven conformational change. Acts upstream of the ribosome quality control system (RQC), a ribosome-associated complex that mediates the extraction of incompletely synthesized nascent chains from stalled ribosomes and their subsequent degradation. Probably generates substrates for RQC.</text>
</comment>
<comment type="subunit">
    <text evidence="1">Homodimer. Binds to stalled ribosomes, contacting rRNA.</text>
</comment>
<comment type="similarity">
    <text evidence="1">Belongs to the DNA mismatch repair MutS family. MutS2 subfamily.</text>
</comment>
<reference key="1">
    <citation type="submission" date="2005-09" db="EMBL/GenBank/DDBJ databases">
        <title>Complete genome sequence of Clostridium kluyveri and comparative genomics of Clostridia species.</title>
        <authorList>
            <person name="Inui M."/>
            <person name="Nonaka H."/>
            <person name="Shinoda Y."/>
            <person name="Ikenaga Y."/>
            <person name="Abe M."/>
            <person name="Naito K."/>
            <person name="Vertes A.A."/>
            <person name="Yukawa H."/>
        </authorList>
    </citation>
    <scope>NUCLEOTIDE SEQUENCE [LARGE SCALE GENOMIC DNA]</scope>
    <source>
        <strain>NBRC 12016</strain>
    </source>
</reference>
<evidence type="ECO:0000255" key="1">
    <source>
        <dbReference type="HAMAP-Rule" id="MF_00092"/>
    </source>
</evidence>
<sequence length="786" mass="88552">MNEKSLRILEFYKVKDELKKYTNTNAAKDLVDNLKPYDNIHDVREHLEETEEALKLIISRGNPPFDGVYDVRQGVKMAQKGSILMPAQIFRIGAILKASRRFEKYIKAKGEGEGFRIIEDICQGIVLLKGLEDKIFISIESEDEISDRASSLLYNIRKSIRDKNASVRDKVNSLIRNYSSYLQDNLYTIRGDRYVLPVRAENKALVPGLVHDQSSSGSTLYIEPMALVNLNNEIKELKLKEKAEIDRILYELSKEIHDNIVVIKNNADIIWELDFIFAKAKFGSELNGNIPIVNDNCIIDIVEGRHPLIDRKTVVPMDVYMGKDFTCLVITGPNTGGKTVALKTMGLLHIMALSGLMIPARENSTVGFFTEIFADIGDEQSIEQNLSTFSSHMTNIINIINNSDEKSLILFDELGAGTDPTEGAALAVSILENLKDRGSMIVATTHYSELKAYALKSNGVENASVEFDVDTLKPTYKLMIGIPGKSNAFEISKRLGLPEFIIKAARENIASEALKFEDLIQSLQEKRIKAENYFREAEILKREAAKIKEKYEQKAIRLQEVRDKSITEAHRKAREIIRESKEEADRILKDIRELEKMGYSSSVKHELEERRKMLKDKLENVEENLYKAKSEDGQRLKSVKEGEEVFIPSLNQKVLVLSKPDNKGEVQVQAGIMKISVNLKELRAPKGSTKNTDKKLKREANLNLRSVATSVDLRGMDSIEAAYITDKYLDDAYVAGLKEVTIIHGKGTGILRSSITNMLKSHSHVKNYRIGEYGEGGTGVTIVELK</sequence>
<feature type="chain" id="PRO_1000118562" description="Endonuclease MutS2">
    <location>
        <begin position="1"/>
        <end position="786"/>
    </location>
</feature>
<feature type="domain" description="Smr" evidence="1">
    <location>
        <begin position="711"/>
        <end position="786"/>
    </location>
</feature>
<feature type="binding site" evidence="1">
    <location>
        <begin position="332"/>
        <end position="339"/>
    </location>
    <ligand>
        <name>ATP</name>
        <dbReference type="ChEBI" id="CHEBI:30616"/>
    </ligand>
</feature>
<protein>
    <recommendedName>
        <fullName evidence="1">Endonuclease MutS2</fullName>
        <ecNumber evidence="1">3.1.-.-</ecNumber>
    </recommendedName>
    <alternativeName>
        <fullName evidence="1">Ribosome-associated protein quality control-upstream factor</fullName>
        <shortName evidence="1">RQC-upstream factor</shortName>
        <shortName evidence="1">RqcU</shortName>
        <ecNumber evidence="1">3.6.4.-</ecNumber>
    </alternativeName>
</protein>
<proteinExistence type="inferred from homology"/>
<keyword id="KW-0067">ATP-binding</keyword>
<keyword id="KW-0238">DNA-binding</keyword>
<keyword id="KW-0255">Endonuclease</keyword>
<keyword id="KW-0378">Hydrolase</keyword>
<keyword id="KW-0540">Nuclease</keyword>
<keyword id="KW-0547">Nucleotide-binding</keyword>
<keyword id="KW-0694">RNA-binding</keyword>
<keyword id="KW-0699">rRNA-binding</keyword>